<organism>
    <name type="scientific">Yersinia enterocolitica</name>
    <dbReference type="NCBI Taxonomy" id="630"/>
    <lineage>
        <taxon>Bacteria</taxon>
        <taxon>Pseudomonadati</taxon>
        <taxon>Pseudomonadota</taxon>
        <taxon>Gammaproteobacteria</taxon>
        <taxon>Enterobacterales</taxon>
        <taxon>Yersiniaceae</taxon>
        <taxon>Yersinia</taxon>
    </lineage>
</organism>
<proteinExistence type="evidence at protein level"/>
<gene>
    <name evidence="1" type="primary">ureB</name>
    <name type="synonym">yeuB</name>
</gene>
<reference key="1">
    <citation type="journal article" date="1994" name="Gene">
        <title>Characterisation of the urease-encoding gene complex of Yersinia enterocolitica.</title>
        <authorList>
            <person name="de Koning-Ward T.F."/>
            <person name="Ward A.C."/>
            <person name="Robins-Browne R.M."/>
        </authorList>
    </citation>
    <scope>NUCLEOTIDE SEQUENCE [GENOMIC DNA]</scope>
    <source>
        <strain>A2635 / Serotype O:8</strain>
    </source>
</reference>
<reference key="2">
    <citation type="journal article" date="1995" name="Infect. Immun.">
        <title>Contribution of urease to acid tolerance in Yersinia enterocolitica.</title>
        <authorList>
            <person name="de Koning-Ward T.F."/>
            <person name="Robins-Browne R.M."/>
        </authorList>
    </citation>
    <scope>ROLE IN VIRULENCE</scope>
    <source>
        <strain>W22703 / Serogroup O:9</strain>
    </source>
</reference>
<reference key="3">
    <citation type="journal article" date="1993" name="Infect. Immun.">
        <title>The putative arthritogenic cationic 19-kilodalton antigen of Yersinia enterocolitica is a urease beta-subunit.</title>
        <authorList>
            <person name="Skurnik M."/>
            <person name="Batsford S."/>
            <person name="Mertz A.K.H."/>
            <person name="Schiltz E."/>
            <person name="Toivanen P."/>
        </authorList>
    </citation>
    <scope>NUCLEOTIDE SEQUENCE [GENOMIC DNA]</scope>
    <scope>PARTIAL PROTEIN SEQUENCE</scope>
    <source>
        <strain>6471/76 / Serotype O:3</strain>
    </source>
</reference>
<reference key="4">
    <citation type="submission" date="1995-10" db="EMBL/GenBank/DDBJ databases">
        <authorList>
            <person name="Skurnik M."/>
        </authorList>
    </citation>
    <scope>SEQUENCE REVISION</scope>
</reference>
<feature type="initiator methionine" description="Removed">
    <location>
        <position position="1"/>
    </location>
</feature>
<feature type="chain" id="PRO_0000067598" description="Urease subunit beta">
    <location>
        <begin position="2"/>
        <end position="164"/>
    </location>
</feature>
<feature type="region of interest" description="Disordered" evidence="2">
    <location>
        <begin position="1"/>
        <end position="30"/>
    </location>
</feature>
<feature type="compositionally biased region" description="Polar residues" evidence="2">
    <location>
        <begin position="1"/>
        <end position="10"/>
    </location>
</feature>
<feature type="compositionally biased region" description="Polar residues" evidence="2">
    <location>
        <begin position="20"/>
        <end position="30"/>
    </location>
</feature>
<feature type="sequence variant" description="In strain: 6471/76 / Serotype O:3.">
    <original>D</original>
    <variation>E</variation>
    <location>
        <position position="32"/>
    </location>
</feature>
<dbReference type="EC" id="3.5.1.5" evidence="1"/>
<dbReference type="EMBL" id="L24101">
    <property type="protein sequence ID" value="AAA50995.1"/>
    <property type="molecule type" value="Genomic_DNA"/>
</dbReference>
<dbReference type="EMBL" id="Z18865">
    <property type="protein sequence ID" value="CAA79315.1"/>
    <property type="molecule type" value="Genomic_DNA"/>
</dbReference>
<dbReference type="PIR" id="S31418">
    <property type="entry name" value="S31418"/>
</dbReference>
<dbReference type="RefSeq" id="WP_005164261.1">
    <property type="nucleotide sequence ID" value="NZ_WJHZ01000053.1"/>
</dbReference>
<dbReference type="SMR" id="P31495"/>
<dbReference type="UniPathway" id="UPA00258">
    <property type="reaction ID" value="UER00370"/>
</dbReference>
<dbReference type="GO" id="GO:0035550">
    <property type="term" value="C:urease complex"/>
    <property type="evidence" value="ECO:0007669"/>
    <property type="project" value="InterPro"/>
</dbReference>
<dbReference type="GO" id="GO:0009039">
    <property type="term" value="F:urease activity"/>
    <property type="evidence" value="ECO:0007669"/>
    <property type="project" value="UniProtKB-UniRule"/>
</dbReference>
<dbReference type="GO" id="GO:0043419">
    <property type="term" value="P:urea catabolic process"/>
    <property type="evidence" value="ECO:0007669"/>
    <property type="project" value="UniProtKB-UniRule"/>
</dbReference>
<dbReference type="CDD" id="cd00407">
    <property type="entry name" value="Urease_beta"/>
    <property type="match status" value="1"/>
</dbReference>
<dbReference type="Gene3D" id="2.10.150.10">
    <property type="entry name" value="Urease, beta subunit"/>
    <property type="match status" value="1"/>
</dbReference>
<dbReference type="HAMAP" id="MF_01954">
    <property type="entry name" value="Urease_beta"/>
    <property type="match status" value="1"/>
</dbReference>
<dbReference type="InterPro" id="IPR002019">
    <property type="entry name" value="Urease_beta-like"/>
</dbReference>
<dbReference type="InterPro" id="IPR036461">
    <property type="entry name" value="Urease_betasu_sf"/>
</dbReference>
<dbReference type="InterPro" id="IPR050069">
    <property type="entry name" value="Urease_subunit"/>
</dbReference>
<dbReference type="NCBIfam" id="NF009682">
    <property type="entry name" value="PRK13203.1"/>
    <property type="match status" value="1"/>
</dbReference>
<dbReference type="NCBIfam" id="TIGR00192">
    <property type="entry name" value="urease_beta"/>
    <property type="match status" value="1"/>
</dbReference>
<dbReference type="PANTHER" id="PTHR33569">
    <property type="entry name" value="UREASE"/>
    <property type="match status" value="1"/>
</dbReference>
<dbReference type="PANTHER" id="PTHR33569:SF1">
    <property type="entry name" value="UREASE"/>
    <property type="match status" value="1"/>
</dbReference>
<dbReference type="Pfam" id="PF00699">
    <property type="entry name" value="Urease_beta"/>
    <property type="match status" value="1"/>
</dbReference>
<dbReference type="SUPFAM" id="SSF51278">
    <property type="entry name" value="Urease, beta-subunit"/>
    <property type="match status" value="1"/>
</dbReference>
<sequence>MSTKTNSTKATSEKTDSLKTNRGTKSSAGYSDQNIPLGGCILADTPITFNENKPVTKVKVRNTGDRPIQVGSHFHFFEANRALEFDRAAAYGKRLNISSTTAIRFEPGDETEVPLIPFGGKQTLYGFNNLVDGWTGEGVVPNSERPDKLEAIRRAAERGFKSSK</sequence>
<evidence type="ECO:0000255" key="1">
    <source>
        <dbReference type="HAMAP-Rule" id="MF_01954"/>
    </source>
</evidence>
<evidence type="ECO:0000256" key="2">
    <source>
        <dbReference type="SAM" id="MobiDB-lite"/>
    </source>
</evidence>
<evidence type="ECO:0000269" key="3">
    <source>
    </source>
</evidence>
<comment type="function">
    <text evidence="3">Expression of the urease operon increases the likelihood of bacterial survival by contributing to acid resistance in vitro and in vivo in BALB/c mice. Y.enterocolitica enters the body via an oral path and must survive the acidic stomach before being able to colonize the intestinal mucosa (PubMed:7558281).</text>
</comment>
<comment type="catalytic activity">
    <reaction evidence="1">
        <text>urea + 2 H2O + H(+) = hydrogencarbonate + 2 NH4(+)</text>
        <dbReference type="Rhea" id="RHEA:20557"/>
        <dbReference type="ChEBI" id="CHEBI:15377"/>
        <dbReference type="ChEBI" id="CHEBI:15378"/>
        <dbReference type="ChEBI" id="CHEBI:16199"/>
        <dbReference type="ChEBI" id="CHEBI:17544"/>
        <dbReference type="ChEBI" id="CHEBI:28938"/>
        <dbReference type="EC" id="3.5.1.5"/>
    </reaction>
</comment>
<comment type="pathway">
    <text evidence="1">Nitrogen metabolism; urea degradation; CO(2) and NH(3) from urea (urease route): step 1/1.</text>
</comment>
<comment type="subunit">
    <text evidence="1">Heterotrimer of UreA (gamma), UreB (beta) and UreC (alpha) subunits. Three heterotrimers associate to form the active enzyme.</text>
</comment>
<comment type="subcellular location">
    <subcellularLocation>
        <location evidence="1">Cytoplasm</location>
    </subcellularLocation>
</comment>
<comment type="similarity">
    <text evidence="1">Belongs to the urease beta subunit family.</text>
</comment>
<accession>P31495</accession>
<protein>
    <recommendedName>
        <fullName evidence="1">Urease subunit beta</fullName>
        <ecNumber evidence="1">3.5.1.5</ecNumber>
    </recommendedName>
    <alternativeName>
        <fullName>Arthritogenic cationic 19 kDa antigen</fullName>
    </alternativeName>
    <alternativeName>
        <fullName evidence="1">Urea amidohydrolase subunit beta</fullName>
    </alternativeName>
</protein>
<keyword id="KW-0963">Cytoplasm</keyword>
<keyword id="KW-0903">Direct protein sequencing</keyword>
<keyword id="KW-0378">Hydrolase</keyword>
<keyword id="KW-0843">Virulence</keyword>
<name>URE2_YEREN</name>